<evidence type="ECO:0000250" key="1"/>
<evidence type="ECO:0000305" key="2"/>
<comment type="function">
    <text evidence="1">Catalyzes the conversion of dihydroorotate to orotate with fumarate as the electron acceptor.</text>
</comment>
<comment type="catalytic activity">
    <reaction>
        <text>(S)-dihydroorotate + fumarate = orotate + succinate</text>
        <dbReference type="Rhea" id="RHEA:30059"/>
        <dbReference type="ChEBI" id="CHEBI:29806"/>
        <dbReference type="ChEBI" id="CHEBI:30031"/>
        <dbReference type="ChEBI" id="CHEBI:30839"/>
        <dbReference type="ChEBI" id="CHEBI:30864"/>
        <dbReference type="EC" id="1.3.98.1"/>
    </reaction>
</comment>
<comment type="cofactor">
    <cofactor evidence="1">
        <name>FMN</name>
        <dbReference type="ChEBI" id="CHEBI:58210"/>
    </cofactor>
    <text evidence="1">Binds 1 FMN per subunit.</text>
</comment>
<comment type="pathway">
    <text>Pyrimidine metabolism; UMP biosynthesis via de novo pathway.</text>
</comment>
<comment type="subunit">
    <text evidence="1">Homodimer.</text>
</comment>
<comment type="subcellular location">
    <subcellularLocation>
        <location evidence="1">Cytoplasm</location>
    </subcellularLocation>
</comment>
<comment type="similarity">
    <text evidence="2">Belongs to the dihydroorotate dehydrogenase family. Type 1 subfamily.</text>
</comment>
<accession>Q1G864</accession>
<gene>
    <name type="primary">pyrD</name>
    <name type="ordered locus">Ldb2114</name>
</gene>
<name>PYRDA_LACDA</name>
<protein>
    <recommendedName>
        <fullName>Dihydroorotate dehydrogenase A (fumarate)</fullName>
        <shortName>DHOD A</shortName>
        <shortName>DHODase A</shortName>
        <shortName>DHOdehase A</shortName>
        <ecNumber>1.3.98.1</ecNumber>
    </recommendedName>
</protein>
<organism>
    <name type="scientific">Lactobacillus delbrueckii subsp. bulgaricus (strain ATCC 11842 / DSM 20081 / BCRC 10696 / JCM 1002 / NBRC 13953 / NCIMB 11778 / NCTC 12712 / WDCM 00102 / Lb 14)</name>
    <dbReference type="NCBI Taxonomy" id="390333"/>
    <lineage>
        <taxon>Bacteria</taxon>
        <taxon>Bacillati</taxon>
        <taxon>Bacillota</taxon>
        <taxon>Bacilli</taxon>
        <taxon>Lactobacillales</taxon>
        <taxon>Lactobacillaceae</taxon>
        <taxon>Lactobacillus</taxon>
    </lineage>
</organism>
<proteinExistence type="inferred from homology"/>
<keyword id="KW-0963">Cytoplasm</keyword>
<keyword id="KW-0285">Flavoprotein</keyword>
<keyword id="KW-0288">FMN</keyword>
<keyword id="KW-0560">Oxidoreductase</keyword>
<keyword id="KW-0665">Pyrimidine biosynthesis</keyword>
<keyword id="KW-1185">Reference proteome</keyword>
<dbReference type="EC" id="1.3.98.1"/>
<dbReference type="EMBL" id="CR954253">
    <property type="protein sequence ID" value="CAI98852.1"/>
    <property type="molecule type" value="Genomic_DNA"/>
</dbReference>
<dbReference type="RefSeq" id="WP_011544329.1">
    <property type="nucleotide sequence ID" value="NC_008054.1"/>
</dbReference>
<dbReference type="SMR" id="Q1G864"/>
<dbReference type="STRING" id="390333.Ldb2114"/>
<dbReference type="KEGG" id="ldb:Ldb2114"/>
<dbReference type="eggNOG" id="COG0167">
    <property type="taxonomic scope" value="Bacteria"/>
</dbReference>
<dbReference type="HOGENOM" id="CLU_042042_0_0_9"/>
<dbReference type="BioCyc" id="LDEL390333:LDB_RS09210-MONOMER"/>
<dbReference type="UniPathway" id="UPA00070"/>
<dbReference type="Proteomes" id="UP000001259">
    <property type="component" value="Chromosome"/>
</dbReference>
<dbReference type="GO" id="GO:0005737">
    <property type="term" value="C:cytoplasm"/>
    <property type="evidence" value="ECO:0007669"/>
    <property type="project" value="UniProtKB-SubCell"/>
</dbReference>
<dbReference type="GO" id="GO:1990663">
    <property type="term" value="F:dihydroorotate dehydrogenase (fumarate) activity"/>
    <property type="evidence" value="ECO:0007669"/>
    <property type="project" value="UniProtKB-EC"/>
</dbReference>
<dbReference type="GO" id="GO:0006207">
    <property type="term" value="P:'de novo' pyrimidine nucleobase biosynthetic process"/>
    <property type="evidence" value="ECO:0007669"/>
    <property type="project" value="InterPro"/>
</dbReference>
<dbReference type="GO" id="GO:0044205">
    <property type="term" value="P:'de novo' UMP biosynthetic process"/>
    <property type="evidence" value="ECO:0007669"/>
    <property type="project" value="UniProtKB-UniRule"/>
</dbReference>
<dbReference type="CDD" id="cd04740">
    <property type="entry name" value="DHOD_1B_like"/>
    <property type="match status" value="1"/>
</dbReference>
<dbReference type="FunFam" id="3.20.20.70:FF:000027">
    <property type="entry name" value="Dihydropyrimidine dehydrogenase [NADP(+)]"/>
    <property type="match status" value="1"/>
</dbReference>
<dbReference type="Gene3D" id="3.20.20.70">
    <property type="entry name" value="Aldolase class I"/>
    <property type="match status" value="1"/>
</dbReference>
<dbReference type="HAMAP" id="MF_00224">
    <property type="entry name" value="DHO_dh_type1"/>
    <property type="match status" value="1"/>
</dbReference>
<dbReference type="InterPro" id="IPR013785">
    <property type="entry name" value="Aldolase_TIM"/>
</dbReference>
<dbReference type="InterPro" id="IPR050074">
    <property type="entry name" value="DHO_dehydrogenase"/>
</dbReference>
<dbReference type="InterPro" id="IPR033888">
    <property type="entry name" value="DHOD_1B"/>
</dbReference>
<dbReference type="InterPro" id="IPR024920">
    <property type="entry name" value="Dihydroorotate_DH_1"/>
</dbReference>
<dbReference type="InterPro" id="IPR012135">
    <property type="entry name" value="Dihydroorotate_DH_1_2"/>
</dbReference>
<dbReference type="InterPro" id="IPR005720">
    <property type="entry name" value="Dihydroorotate_DH_cat"/>
</dbReference>
<dbReference type="InterPro" id="IPR001295">
    <property type="entry name" value="Dihydroorotate_DH_CS"/>
</dbReference>
<dbReference type="InterPro" id="IPR049622">
    <property type="entry name" value="Dihydroorotate_DH_I"/>
</dbReference>
<dbReference type="NCBIfam" id="NF005574">
    <property type="entry name" value="PRK07259.1"/>
    <property type="match status" value="1"/>
</dbReference>
<dbReference type="NCBIfam" id="TIGR01037">
    <property type="entry name" value="pyrD_sub1_fam"/>
    <property type="match status" value="1"/>
</dbReference>
<dbReference type="PANTHER" id="PTHR48109:SF1">
    <property type="entry name" value="DIHYDROOROTATE DEHYDROGENASE (FUMARATE)"/>
    <property type="match status" value="1"/>
</dbReference>
<dbReference type="PANTHER" id="PTHR48109">
    <property type="entry name" value="DIHYDROOROTATE DEHYDROGENASE (QUINONE), MITOCHONDRIAL-RELATED"/>
    <property type="match status" value="1"/>
</dbReference>
<dbReference type="Pfam" id="PF01180">
    <property type="entry name" value="DHO_dh"/>
    <property type="match status" value="1"/>
</dbReference>
<dbReference type="PIRSF" id="PIRSF000164">
    <property type="entry name" value="DHO_oxidase"/>
    <property type="match status" value="1"/>
</dbReference>
<dbReference type="SUPFAM" id="SSF51395">
    <property type="entry name" value="FMN-linked oxidoreductases"/>
    <property type="match status" value="1"/>
</dbReference>
<dbReference type="PROSITE" id="PS00912">
    <property type="entry name" value="DHODEHASE_2"/>
    <property type="match status" value="1"/>
</dbReference>
<reference key="1">
    <citation type="journal article" date="2006" name="Proc. Natl. Acad. Sci. U.S.A.">
        <title>The complete genome sequence of Lactobacillus bulgaricus reveals extensive and ongoing reductive evolution.</title>
        <authorList>
            <person name="van de Guchte M."/>
            <person name="Penaud S."/>
            <person name="Grimaldi C."/>
            <person name="Barbe V."/>
            <person name="Bryson K."/>
            <person name="Nicolas P."/>
            <person name="Robert C."/>
            <person name="Oztas S."/>
            <person name="Mangenot S."/>
            <person name="Couloux A."/>
            <person name="Loux V."/>
            <person name="Dervyn R."/>
            <person name="Bossy R."/>
            <person name="Bolotin A."/>
            <person name="Batto J.-M."/>
            <person name="Walunas T."/>
            <person name="Gibrat J.-F."/>
            <person name="Bessieres P."/>
            <person name="Weissenbach J."/>
            <person name="Ehrlich S.D."/>
            <person name="Maguin E."/>
        </authorList>
    </citation>
    <scope>NUCLEOTIDE SEQUENCE [LARGE SCALE GENOMIC DNA]</scope>
    <source>
        <strain>ATCC 11842 / DSM 20081 / BCRC 10696 / JCM 1002 / NBRC 13953 / NCIMB 11778 / NCTC 12712 / WDCM 00102 / Lb 14</strain>
    </source>
</reference>
<feature type="chain" id="PRO_1000024135" description="Dihydroorotate dehydrogenase A (fumarate)">
    <location>
        <begin position="1"/>
        <end position="307"/>
    </location>
</feature>
<feature type="active site" description="Nucleophile">
    <location>
        <position position="133"/>
    </location>
</feature>
<feature type="binding site" evidence="1">
    <location>
        <position position="21"/>
    </location>
    <ligand>
        <name>FMN</name>
        <dbReference type="ChEBI" id="CHEBI:58210"/>
    </ligand>
</feature>
<feature type="binding site" evidence="1">
    <location>
        <begin position="46"/>
        <end position="47"/>
    </location>
    <ligand>
        <name>FMN</name>
        <dbReference type="ChEBI" id="CHEBI:58210"/>
    </ligand>
</feature>
<feature type="binding site" evidence="1">
    <location>
        <position position="46"/>
    </location>
    <ligand>
        <name>substrate</name>
    </ligand>
</feature>
<feature type="binding site" evidence="1">
    <location>
        <begin position="70"/>
        <end position="74"/>
    </location>
    <ligand>
        <name>substrate</name>
    </ligand>
</feature>
<feature type="binding site" evidence="1">
    <location>
        <position position="130"/>
    </location>
    <ligand>
        <name>FMN</name>
        <dbReference type="ChEBI" id="CHEBI:58210"/>
    </ligand>
</feature>
<feature type="binding site" evidence="1">
    <location>
        <position position="130"/>
    </location>
    <ligand>
        <name>substrate</name>
    </ligand>
</feature>
<feature type="binding site" evidence="1">
    <location>
        <position position="168"/>
    </location>
    <ligand>
        <name>FMN</name>
        <dbReference type="ChEBI" id="CHEBI:58210"/>
    </ligand>
</feature>
<feature type="binding site" evidence="1">
    <location>
        <position position="194"/>
    </location>
    <ligand>
        <name>FMN</name>
        <dbReference type="ChEBI" id="CHEBI:58210"/>
    </ligand>
</feature>
<feature type="binding site" evidence="1">
    <location>
        <begin position="195"/>
        <end position="196"/>
    </location>
    <ligand>
        <name>substrate</name>
    </ligand>
</feature>
<feature type="binding site" evidence="1">
    <location>
        <position position="220"/>
    </location>
    <ligand>
        <name>FMN</name>
        <dbReference type="ChEBI" id="CHEBI:58210"/>
    </ligand>
</feature>
<feature type="binding site" evidence="1">
    <location>
        <begin position="246"/>
        <end position="247"/>
    </location>
    <ligand>
        <name>FMN</name>
        <dbReference type="ChEBI" id="CHEBI:58210"/>
    </ligand>
</feature>
<feature type="binding site" evidence="1">
    <location>
        <begin position="268"/>
        <end position="269"/>
    </location>
    <ligand>
        <name>FMN</name>
        <dbReference type="ChEBI" id="CHEBI:58210"/>
    </ligand>
</feature>
<sequence>MVNTHVNLPGLDLKNPVMPASGTFGFGDVPAAQKFDLNDLGAMVIKTTTPHATTGNPQPQIAILEDGVLNSVGLTNPGVDQVISEKLTKLRHQYLDLPIMASVGGDSEDDYVEVAKKLSASGLVNALEINVSCPNVAQGGMSFGVHAGVVEELTKKIKMAVALPIYVKLTPNVTDIVEIAKAAESGGADGISMINTVLGMRIDVKTRKPLLGHNMGGLSGEAVKPIAIRMISQVRQVTQLPIIGMGGISTAQDVIEFILAGANAVAVGSAHFEDELAAKHIAENLPAELEKLGIEDINDLVGQVKFN</sequence>